<evidence type="ECO:0000250" key="1"/>
<evidence type="ECO:0000250" key="2">
    <source>
        <dbReference type="UniProtKB" id="Q80ZD8"/>
    </source>
</evidence>
<evidence type="ECO:0000255" key="3"/>
<evidence type="ECO:0000255" key="4">
    <source>
        <dbReference type="PROSITE-ProRule" id="PRU00114"/>
    </source>
</evidence>
<evidence type="ECO:0000256" key="5">
    <source>
        <dbReference type="SAM" id="MobiDB-lite"/>
    </source>
</evidence>
<evidence type="ECO:0000269" key="6">
    <source>
    </source>
</evidence>
<evidence type="ECO:0000303" key="7">
    <source>
    </source>
</evidence>
<evidence type="ECO:0000305" key="8"/>
<evidence type="ECO:0000312" key="9">
    <source>
        <dbReference type="EMBL" id="AAO48950.1"/>
    </source>
</evidence>
<evidence type="ECO:0007744" key="10">
    <source>
    </source>
</evidence>
<protein>
    <recommendedName>
        <fullName>Amphoterin-induced protein 1</fullName>
    </recommendedName>
    <alternativeName>
        <fullName>AMIGO-1</fullName>
    </alternativeName>
    <alternativeName>
        <fullName>Alivin-2</fullName>
    </alternativeName>
</protein>
<reference key="1">
    <citation type="journal article" date="2003" name="J. Cell Biol.">
        <title>AMIGO, a transmembrane protein implicated in axon tract development, defines a novel protein family with leucine-rich repeats.</title>
        <authorList>
            <person name="Kuja-Panula J."/>
            <person name="Kiiltomaeki M."/>
            <person name="Yamashiro T."/>
            <person name="Rouhiainen A."/>
            <person name="Rauvala H."/>
        </authorList>
    </citation>
    <scope>NUCLEOTIDE SEQUENCE [MRNA]</scope>
    <scope>FUNCTION</scope>
    <scope>SUBCELLULAR LOCATION</scope>
    <scope>DEVELOPMENTAL STAGE</scope>
    <scope>INDUCTION</scope>
    <scope>SUBUNIT</scope>
    <scope>INTERACTION WITH AMIGO2 AND AMIGO3</scope>
    <source>
        <strain evidence="9">Wistar</strain>
        <tissue evidence="6">Brain</tissue>
    </source>
</reference>
<reference key="2">
    <citation type="journal article" date="2012" name="Nat. Commun.">
        <title>Quantitative maps of protein phosphorylation sites across 14 different rat organs and tissues.</title>
        <authorList>
            <person name="Lundby A."/>
            <person name="Secher A."/>
            <person name="Lage K."/>
            <person name="Nordsborg N.B."/>
            <person name="Dmytriyev A."/>
            <person name="Lundby C."/>
            <person name="Olsen J.V."/>
        </authorList>
    </citation>
    <scope>PHOSPHORYLATION [LARGE SCALE ANALYSIS] AT SER-477</scope>
    <scope>IDENTIFICATION BY MASS SPECTROMETRY [LARGE SCALE ANALYSIS]</scope>
</reference>
<sequence>MQPQRDLRGLWLLLLSLFLLLFEVARAGRPVVSCPANCLCASNILSCSKQQLPNVPQSLPGYTALLDLSHNNLSRLKAEWTPTRLTNLHSLLLSHNHLNFISSEAFVPVPNLRYLDLSSNHLHTLDEFLFSGLQALEVLLLYNNHIVVVDRNAFEDMAQLQKLYLSQNMISRFPLELIKDANRLPKLTLLDLSSNKLKKLPLTDLQKLPAWVKNGLYLHNNPLECDCKLYQLFSHWQYRQLSSVMDFQEDLYCVHSKKLHNVFSLDFFNCSEYKESAWEAHLGDTLTITCDTKQQGMTKVWVTPSNEQVLNQGANGTVTVSEDGNLHFKEVQVEDGGVYTCYAMGETFNETLSVELKVYNFTLHGHHDTLNTAYTTLVGCILSVVLVLIYLYLTPCRCWCRGVEKPSSHQGDSLSSSMLSTTPNHDPMAGGDKDDGFDRRVAFLEPAGPGQGQNGKLKPGNTLPVPEATGKGQRRMSDPESVSSVFSDTPIVV</sequence>
<dbReference type="EMBL" id="AY237729">
    <property type="protein sequence ID" value="AAO48950.1"/>
    <property type="molecule type" value="mRNA"/>
</dbReference>
<dbReference type="RefSeq" id="NP_001399480.1">
    <property type="nucleotide sequence ID" value="NM_001412551.1"/>
</dbReference>
<dbReference type="RefSeq" id="NP_996764.1">
    <property type="nucleotide sequence ID" value="NM_206881.1"/>
</dbReference>
<dbReference type="RefSeq" id="XP_006233202.1">
    <property type="nucleotide sequence ID" value="XM_006233140.4"/>
</dbReference>
<dbReference type="RefSeq" id="XP_008759613.1">
    <property type="nucleotide sequence ID" value="XM_008761391.1"/>
</dbReference>
<dbReference type="RefSeq" id="XP_063137728.1">
    <property type="nucleotide sequence ID" value="XM_063281658.1"/>
</dbReference>
<dbReference type="SMR" id="Q80ZD7"/>
<dbReference type="FunCoup" id="Q80ZD7">
    <property type="interactions" value="1920"/>
</dbReference>
<dbReference type="IntAct" id="Q80ZD7">
    <property type="interactions" value="1"/>
</dbReference>
<dbReference type="MINT" id="Q80ZD7"/>
<dbReference type="STRING" id="10116.ENSRNOP00000066608"/>
<dbReference type="GlyCosmos" id="Q80ZD7">
    <property type="glycosylation" value="5 sites, No reported glycans"/>
</dbReference>
<dbReference type="GlyGen" id="Q80ZD7">
    <property type="glycosylation" value="5 sites"/>
</dbReference>
<dbReference type="iPTMnet" id="Q80ZD7"/>
<dbReference type="PhosphoSitePlus" id="Q80ZD7"/>
<dbReference type="PaxDb" id="10116-ENSRNOP00000066608"/>
<dbReference type="ABCD" id="Q80ZD7">
    <property type="antibodies" value="4 sequenced antibodies"/>
</dbReference>
<dbReference type="Ensembl" id="ENSRNOT00000074725.2">
    <property type="protein sequence ID" value="ENSRNOP00000066608.1"/>
    <property type="gene ID" value="ENSRNOG00000045665.2"/>
</dbReference>
<dbReference type="GeneID" id="295365"/>
<dbReference type="UCSC" id="RGD:1303079">
    <property type="organism name" value="rat"/>
</dbReference>
<dbReference type="AGR" id="RGD:1303079"/>
<dbReference type="CTD" id="57463"/>
<dbReference type="RGD" id="1303079">
    <property type="gene designation" value="Amigo1"/>
</dbReference>
<dbReference type="eggNOG" id="ENOG502QVUQ">
    <property type="taxonomic scope" value="Eukaryota"/>
</dbReference>
<dbReference type="GeneTree" id="ENSGT00950000183146"/>
<dbReference type="HOGENOM" id="CLU_030478_0_0_1"/>
<dbReference type="InParanoid" id="Q80ZD7"/>
<dbReference type="OMA" id="VFSDTPM"/>
<dbReference type="OrthoDB" id="676979at2759"/>
<dbReference type="PhylomeDB" id="Q80ZD7"/>
<dbReference type="PRO" id="PR:Q80ZD7"/>
<dbReference type="Proteomes" id="UP000002494">
    <property type="component" value="Chromosome 2"/>
</dbReference>
<dbReference type="Bgee" id="ENSRNOG00000045665">
    <property type="expression patterns" value="Expressed in frontal cortex and 20 other cell types or tissues"/>
</dbReference>
<dbReference type="GO" id="GO:0030425">
    <property type="term" value="C:dendrite"/>
    <property type="evidence" value="ECO:0000250"/>
    <property type="project" value="UniProtKB"/>
</dbReference>
<dbReference type="GO" id="GO:0016020">
    <property type="term" value="C:membrane"/>
    <property type="evidence" value="ECO:0000318"/>
    <property type="project" value="GO_Central"/>
</dbReference>
<dbReference type="GO" id="GO:0043025">
    <property type="term" value="C:neuronal cell body"/>
    <property type="evidence" value="ECO:0000314"/>
    <property type="project" value="RGD"/>
</dbReference>
<dbReference type="GO" id="GO:0032809">
    <property type="term" value="C:neuronal cell body membrane"/>
    <property type="evidence" value="ECO:0000250"/>
    <property type="project" value="UniProtKB"/>
</dbReference>
<dbReference type="GO" id="GO:1990030">
    <property type="term" value="C:pericellular basket"/>
    <property type="evidence" value="ECO:0000314"/>
    <property type="project" value="RGD"/>
</dbReference>
<dbReference type="GO" id="GO:0043204">
    <property type="term" value="C:perikaryon"/>
    <property type="evidence" value="ECO:0007669"/>
    <property type="project" value="UniProtKB-SubCell"/>
</dbReference>
<dbReference type="GO" id="GO:0005886">
    <property type="term" value="C:plasma membrane"/>
    <property type="evidence" value="ECO:0000303"/>
    <property type="project" value="UniProtKB"/>
</dbReference>
<dbReference type="GO" id="GO:0008076">
    <property type="term" value="C:voltage-gated potassium channel complex"/>
    <property type="evidence" value="ECO:0000266"/>
    <property type="project" value="RGD"/>
</dbReference>
<dbReference type="GO" id="GO:0015459">
    <property type="term" value="F:potassium channel regulator activity"/>
    <property type="evidence" value="ECO:0000250"/>
    <property type="project" value="UniProtKB"/>
</dbReference>
<dbReference type="GO" id="GO:0007413">
    <property type="term" value="P:axonal fasciculation"/>
    <property type="evidence" value="ECO:0000314"/>
    <property type="project" value="UniProtKB"/>
</dbReference>
<dbReference type="GO" id="GO:0007409">
    <property type="term" value="P:axonogenesis"/>
    <property type="evidence" value="ECO:0000314"/>
    <property type="project" value="RGD"/>
</dbReference>
<dbReference type="GO" id="GO:0007420">
    <property type="term" value="P:brain development"/>
    <property type="evidence" value="ECO:0000318"/>
    <property type="project" value="GO_Central"/>
</dbReference>
<dbReference type="GO" id="GO:0007155">
    <property type="term" value="P:cell adhesion"/>
    <property type="evidence" value="ECO:0000304"/>
    <property type="project" value="RGD"/>
</dbReference>
<dbReference type="GO" id="GO:1905232">
    <property type="term" value="P:cellular response to L-glutamate"/>
    <property type="evidence" value="ECO:0000314"/>
    <property type="project" value="RGD"/>
</dbReference>
<dbReference type="GO" id="GO:0007157">
    <property type="term" value="P:heterophilic cell-cell adhesion via plasma membrane cell adhesion molecules"/>
    <property type="evidence" value="ECO:0000353"/>
    <property type="project" value="UniProtKB"/>
</dbReference>
<dbReference type="GO" id="GO:0007156">
    <property type="term" value="P:homophilic cell adhesion via plasma membrane adhesion molecules"/>
    <property type="evidence" value="ECO:0000353"/>
    <property type="project" value="UniProtKB"/>
</dbReference>
<dbReference type="GO" id="GO:0042552">
    <property type="term" value="P:myelination"/>
    <property type="evidence" value="ECO:0000270"/>
    <property type="project" value="UniProtKB"/>
</dbReference>
<dbReference type="GO" id="GO:0106030">
    <property type="term" value="P:neuron projection fasciculation"/>
    <property type="evidence" value="ECO:0000314"/>
    <property type="project" value="RGD"/>
</dbReference>
<dbReference type="GO" id="GO:0050772">
    <property type="term" value="P:positive regulation of axonogenesis"/>
    <property type="evidence" value="ECO:0000314"/>
    <property type="project" value="UniProtKB"/>
</dbReference>
<dbReference type="GO" id="GO:0010976">
    <property type="term" value="P:positive regulation of neuron projection development"/>
    <property type="evidence" value="ECO:0000314"/>
    <property type="project" value="RGD"/>
</dbReference>
<dbReference type="GO" id="GO:1901381">
    <property type="term" value="P:positive regulation of potassium ion transmembrane transport"/>
    <property type="evidence" value="ECO:0000250"/>
    <property type="project" value="UniProtKB"/>
</dbReference>
<dbReference type="GO" id="GO:0051965">
    <property type="term" value="P:positive regulation of synapse assembly"/>
    <property type="evidence" value="ECO:0000266"/>
    <property type="project" value="RGD"/>
</dbReference>
<dbReference type="FunFam" id="3.80.10.10:FF:000181">
    <property type="entry name" value="amphoterin-induced protein 1 isoform X1"/>
    <property type="match status" value="1"/>
</dbReference>
<dbReference type="FunFam" id="2.60.40.10:FF:001123">
    <property type="entry name" value="Amphoterin-induced protein 1 isoform X2"/>
    <property type="match status" value="1"/>
</dbReference>
<dbReference type="Gene3D" id="2.60.40.10">
    <property type="entry name" value="Immunoglobulins"/>
    <property type="match status" value="1"/>
</dbReference>
<dbReference type="Gene3D" id="3.80.10.10">
    <property type="entry name" value="Ribonuclease Inhibitor"/>
    <property type="match status" value="1"/>
</dbReference>
<dbReference type="InterPro" id="IPR031283">
    <property type="entry name" value="AMIGO"/>
</dbReference>
<dbReference type="InterPro" id="IPR000483">
    <property type="entry name" value="Cys-rich_flank_reg_C"/>
</dbReference>
<dbReference type="InterPro" id="IPR007110">
    <property type="entry name" value="Ig-like_dom"/>
</dbReference>
<dbReference type="InterPro" id="IPR036179">
    <property type="entry name" value="Ig-like_dom_sf"/>
</dbReference>
<dbReference type="InterPro" id="IPR013783">
    <property type="entry name" value="Ig-like_fold"/>
</dbReference>
<dbReference type="InterPro" id="IPR013098">
    <property type="entry name" value="Ig_I-set"/>
</dbReference>
<dbReference type="InterPro" id="IPR003599">
    <property type="entry name" value="Ig_sub"/>
</dbReference>
<dbReference type="InterPro" id="IPR003598">
    <property type="entry name" value="Ig_sub2"/>
</dbReference>
<dbReference type="InterPro" id="IPR001611">
    <property type="entry name" value="Leu-rich_rpt"/>
</dbReference>
<dbReference type="InterPro" id="IPR003591">
    <property type="entry name" value="Leu-rich_rpt_typical-subtyp"/>
</dbReference>
<dbReference type="InterPro" id="IPR032675">
    <property type="entry name" value="LRR_dom_sf"/>
</dbReference>
<dbReference type="PANTHER" id="PTHR24368">
    <property type="entry name" value="AMPHOTERIN-INDUCED PROTEIN"/>
    <property type="match status" value="1"/>
</dbReference>
<dbReference type="PANTHER" id="PTHR24368:SF1">
    <property type="entry name" value="AMPHOTERIN-INDUCED PROTEIN 1"/>
    <property type="match status" value="1"/>
</dbReference>
<dbReference type="Pfam" id="PF07679">
    <property type="entry name" value="I-set"/>
    <property type="match status" value="1"/>
</dbReference>
<dbReference type="Pfam" id="PF00560">
    <property type="entry name" value="LRR_1"/>
    <property type="match status" value="1"/>
</dbReference>
<dbReference type="Pfam" id="PF13855">
    <property type="entry name" value="LRR_8"/>
    <property type="match status" value="1"/>
</dbReference>
<dbReference type="PRINTS" id="PR00019">
    <property type="entry name" value="LEURICHRPT"/>
</dbReference>
<dbReference type="SMART" id="SM00409">
    <property type="entry name" value="IG"/>
    <property type="match status" value="1"/>
</dbReference>
<dbReference type="SMART" id="SM00408">
    <property type="entry name" value="IGc2"/>
    <property type="match status" value="1"/>
</dbReference>
<dbReference type="SMART" id="SM00369">
    <property type="entry name" value="LRR_TYP"/>
    <property type="match status" value="5"/>
</dbReference>
<dbReference type="SMART" id="SM00082">
    <property type="entry name" value="LRRCT"/>
    <property type="match status" value="1"/>
</dbReference>
<dbReference type="SUPFAM" id="SSF48726">
    <property type="entry name" value="Immunoglobulin"/>
    <property type="match status" value="1"/>
</dbReference>
<dbReference type="SUPFAM" id="SSF52058">
    <property type="entry name" value="L domain-like"/>
    <property type="match status" value="1"/>
</dbReference>
<dbReference type="PROSITE" id="PS50835">
    <property type="entry name" value="IG_LIKE"/>
    <property type="match status" value="1"/>
</dbReference>
<dbReference type="PROSITE" id="PS51450">
    <property type="entry name" value="LRR"/>
    <property type="match status" value="6"/>
</dbReference>
<organism>
    <name type="scientific">Rattus norvegicus</name>
    <name type="common">Rat</name>
    <dbReference type="NCBI Taxonomy" id="10116"/>
    <lineage>
        <taxon>Eukaryota</taxon>
        <taxon>Metazoa</taxon>
        <taxon>Chordata</taxon>
        <taxon>Craniata</taxon>
        <taxon>Vertebrata</taxon>
        <taxon>Euteleostomi</taxon>
        <taxon>Mammalia</taxon>
        <taxon>Eutheria</taxon>
        <taxon>Euarchontoglires</taxon>
        <taxon>Glires</taxon>
        <taxon>Rodentia</taxon>
        <taxon>Myomorpha</taxon>
        <taxon>Muroidea</taxon>
        <taxon>Muridae</taxon>
        <taxon>Murinae</taxon>
        <taxon>Rattus</taxon>
    </lineage>
</organism>
<comment type="function">
    <text evidence="2 6 7">Promotes growth and fasciculation of neurites from cultured hippocampal neurons. May be involved in fasciculation as well as myelination of developing neural axons. May have a role in regeneration as well as neural plasticity in the adult nervous system. May mediate homophilic as well as heterophilic cell-cell interaction and contribute to signal transduction through its intracellular domain (PubMed:12629050). Assembled with KCNB1 modulates the gating characteristics of the delayed rectifier voltage-dependent potassium channel KCNB1 (By similarity).</text>
</comment>
<comment type="subunit">
    <text evidence="2 6">Homodimer, and heterodimer with AMIGO2 and AMIGO3 (PubMed:12629050). Interacts with KCNB1 (By similarity).</text>
</comment>
<comment type="subcellular location">
    <subcellularLocation>
        <location evidence="2">Cell membrane</location>
        <topology evidence="2">Single-pass type I membrane protein</topology>
    </subcellularLocation>
    <subcellularLocation>
        <location evidence="2">Perikaryon</location>
    </subcellularLocation>
    <subcellularLocation>
        <location evidence="2">Cell projection</location>
        <location evidence="2">Dendrite</location>
    </subcellularLocation>
    <subcellularLocation>
        <location evidence="6">Cell projection</location>
        <location evidence="6">Axon</location>
    </subcellularLocation>
    <text evidence="2">Associated with axons of neuronal cells (PubMed:12629050). Colocalizes with KCNB1 at high-density somatodendritic clusters on the surface of hippocampal and cortical neurons (By similarity).</text>
</comment>
<comment type="developmental stage">
    <text evidence="6">Expressed at moderate levels in the central nervous system of stage 13-14 embryos. Highest levels at this stage in fiber tracts from dorsal root ganglia and trigeminal ganglion to the spinal cord as well as in fibers on both sides of the Purkinje cell layer of the cerebellum. Expression is down-regulated during postnatal stages P6 to P10 followed by up-regulation at the onset of myelination. High level expression in most myelinated axon tracts of the adult including cerebellum, pons, medulla, and spinal cord as well as in nonmyelinated fiber tracts in the striatum lucidum CA3 region of the hippocampus.</text>
</comment>
<comment type="induction">
    <text evidence="6">By HMGB1/amphoterin; in cultured hippocampal neurons.</text>
</comment>
<comment type="domain">
    <text evidence="1">The LRR repeat region mediates homodimerization.</text>
</comment>
<comment type="similarity">
    <text evidence="8">Belongs to the immunoglobulin superfamily. AMIGO family.</text>
</comment>
<keyword id="KW-0130">Cell adhesion</keyword>
<keyword id="KW-1003">Cell membrane</keyword>
<keyword id="KW-0966">Cell projection</keyword>
<keyword id="KW-0217">Developmental protein</keyword>
<keyword id="KW-0221">Differentiation</keyword>
<keyword id="KW-1015">Disulfide bond</keyword>
<keyword id="KW-0325">Glycoprotein</keyword>
<keyword id="KW-0393">Immunoglobulin domain</keyword>
<keyword id="KW-0433">Leucine-rich repeat</keyword>
<keyword id="KW-0472">Membrane</keyword>
<keyword id="KW-0524">Neurogenesis</keyword>
<keyword id="KW-0597">Phosphoprotein</keyword>
<keyword id="KW-1185">Reference proteome</keyword>
<keyword id="KW-0677">Repeat</keyword>
<keyword id="KW-0732">Signal</keyword>
<keyword id="KW-0812">Transmembrane</keyword>
<keyword id="KW-1133">Transmembrane helix</keyword>
<name>AMGO1_RAT</name>
<proteinExistence type="evidence at protein level"/>
<gene>
    <name evidence="2" type="primary">Amigo1</name>
    <name evidence="2" type="synonym">Ali2</name>
    <name evidence="7" type="synonym">Amigo</name>
</gene>
<accession>Q80ZD7</accession>
<feature type="signal peptide" evidence="3">
    <location>
        <begin position="1"/>
        <end position="27"/>
    </location>
</feature>
<feature type="chain" id="PRO_0000014508" description="Amphoterin-induced protein 1" evidence="3">
    <location>
        <begin position="28"/>
        <end position="493"/>
    </location>
</feature>
<feature type="topological domain" description="Extracellular" evidence="3">
    <location>
        <begin position="28"/>
        <end position="372"/>
    </location>
</feature>
<feature type="transmembrane region" description="Helical" evidence="3">
    <location>
        <begin position="373"/>
        <end position="393"/>
    </location>
</feature>
<feature type="topological domain" description="Cytoplasmic" evidence="3">
    <location>
        <begin position="394"/>
        <end position="493"/>
    </location>
</feature>
<feature type="domain" description="LRRNT">
    <location>
        <begin position="28"/>
        <end position="61"/>
    </location>
</feature>
<feature type="repeat" description="LRR 1">
    <location>
        <begin position="62"/>
        <end position="83"/>
    </location>
</feature>
<feature type="repeat" description="LRR 2">
    <location>
        <begin position="87"/>
        <end position="108"/>
    </location>
</feature>
<feature type="repeat" description="LRR 3">
    <location>
        <begin position="111"/>
        <end position="132"/>
    </location>
</feature>
<feature type="repeat" description="LRR 4">
    <location>
        <begin position="135"/>
        <end position="156"/>
    </location>
</feature>
<feature type="repeat" description="LRR 5">
    <location>
        <begin position="159"/>
        <end position="179"/>
    </location>
</feature>
<feature type="repeat" description="LRR 6">
    <location>
        <begin position="186"/>
        <end position="206"/>
    </location>
</feature>
<feature type="domain" description="LRRCT">
    <location>
        <begin position="221"/>
        <end position="272"/>
    </location>
</feature>
<feature type="domain" description="Ig-like C2-type" evidence="3">
    <location>
        <begin position="269"/>
        <end position="353"/>
    </location>
</feature>
<feature type="region of interest" description="Disordered" evidence="5">
    <location>
        <begin position="405"/>
        <end position="493"/>
    </location>
</feature>
<feature type="compositionally biased region" description="Polar residues" evidence="5">
    <location>
        <begin position="408"/>
        <end position="424"/>
    </location>
</feature>
<feature type="compositionally biased region" description="Basic and acidic residues" evidence="5">
    <location>
        <begin position="431"/>
        <end position="442"/>
    </location>
</feature>
<feature type="modified residue" description="Phosphoserine" evidence="10">
    <location>
        <position position="477"/>
    </location>
</feature>
<feature type="modified residue" description="Phosphoserine" evidence="2">
    <location>
        <position position="481"/>
    </location>
</feature>
<feature type="glycosylation site" description="N-linked (GlcNAc...) asparagine" evidence="3">
    <location>
        <position position="72"/>
    </location>
</feature>
<feature type="glycosylation site" description="N-linked (GlcNAc...) asparagine" evidence="3">
    <location>
        <position position="269"/>
    </location>
</feature>
<feature type="glycosylation site" description="N-linked (GlcNAc...) asparagine" evidence="3">
    <location>
        <position position="315"/>
    </location>
</feature>
<feature type="glycosylation site" description="N-linked (GlcNAc...) asparagine" evidence="3">
    <location>
        <position position="349"/>
    </location>
</feature>
<feature type="glycosylation site" description="N-linked (GlcNAc...) asparagine" evidence="3">
    <location>
        <position position="360"/>
    </location>
</feature>
<feature type="disulfide bond" evidence="4">
    <location>
        <begin position="34"/>
        <end position="40"/>
    </location>
</feature>
<feature type="disulfide bond" evidence="4">
    <location>
        <begin position="38"/>
        <end position="47"/>
    </location>
</feature>
<feature type="disulfide bond" evidence="4">
    <location>
        <begin position="225"/>
        <end position="253"/>
    </location>
</feature>
<feature type="disulfide bond" evidence="4">
    <location>
        <begin position="227"/>
        <end position="270"/>
    </location>
</feature>
<feature type="disulfide bond" evidence="4">
    <location>
        <begin position="290"/>
        <end position="341"/>
    </location>
</feature>